<sequence length="82" mass="9584">HLQFHCPRVERNQAKKNFSCKLCDKVYTSLGALKMHIRTHTLPCKCDICHKAFSRPWLLQGHIRTHTGEKPFSCQHCHRAFA</sequence>
<protein>
    <recommendedName>
        <fullName>Escargot/snail protein homolog</fullName>
    </recommendedName>
</protein>
<dbReference type="EMBL" id="L01614">
    <property type="protein sequence ID" value="AAA29817.1"/>
    <property type="molecule type" value="Genomic_DNA"/>
</dbReference>
<dbReference type="SMR" id="Q01799"/>
<dbReference type="GO" id="GO:0005634">
    <property type="term" value="C:nucleus"/>
    <property type="evidence" value="ECO:0007669"/>
    <property type="project" value="UniProtKB-SubCell"/>
</dbReference>
<dbReference type="GO" id="GO:0000981">
    <property type="term" value="F:DNA-binding transcription factor activity, RNA polymerase II-specific"/>
    <property type="evidence" value="ECO:0007669"/>
    <property type="project" value="TreeGrafter"/>
</dbReference>
<dbReference type="GO" id="GO:0000978">
    <property type="term" value="F:RNA polymerase II cis-regulatory region sequence-specific DNA binding"/>
    <property type="evidence" value="ECO:0007669"/>
    <property type="project" value="TreeGrafter"/>
</dbReference>
<dbReference type="GO" id="GO:0008270">
    <property type="term" value="F:zinc ion binding"/>
    <property type="evidence" value="ECO:0007669"/>
    <property type="project" value="UniProtKB-KW"/>
</dbReference>
<dbReference type="FunFam" id="3.30.160.60:FF:000043">
    <property type="entry name" value="Scratch family zinc finger 2"/>
    <property type="match status" value="1"/>
</dbReference>
<dbReference type="FunFam" id="3.30.160.60:FF:000860">
    <property type="entry name" value="zinc finger protein SNAI2"/>
    <property type="match status" value="1"/>
</dbReference>
<dbReference type="Gene3D" id="3.30.160.60">
    <property type="entry name" value="Classic Zinc Finger"/>
    <property type="match status" value="3"/>
</dbReference>
<dbReference type="InterPro" id="IPR050527">
    <property type="entry name" value="Snail/Krueppel_Znf"/>
</dbReference>
<dbReference type="InterPro" id="IPR036236">
    <property type="entry name" value="Znf_C2H2_sf"/>
</dbReference>
<dbReference type="InterPro" id="IPR013087">
    <property type="entry name" value="Znf_C2H2_type"/>
</dbReference>
<dbReference type="PANTHER" id="PTHR24388:SF54">
    <property type="entry name" value="PROTEIN ESCARGOT"/>
    <property type="match status" value="1"/>
</dbReference>
<dbReference type="PANTHER" id="PTHR24388">
    <property type="entry name" value="ZINC FINGER PROTEIN"/>
    <property type="match status" value="1"/>
</dbReference>
<dbReference type="Pfam" id="PF00096">
    <property type="entry name" value="zf-C2H2"/>
    <property type="match status" value="2"/>
</dbReference>
<dbReference type="SMART" id="SM00355">
    <property type="entry name" value="ZnF_C2H2"/>
    <property type="match status" value="2"/>
</dbReference>
<dbReference type="SUPFAM" id="SSF57667">
    <property type="entry name" value="beta-beta-alpha zinc fingers"/>
    <property type="match status" value="2"/>
</dbReference>
<dbReference type="PROSITE" id="PS00028">
    <property type="entry name" value="ZINC_FINGER_C2H2_1"/>
    <property type="match status" value="2"/>
</dbReference>
<dbReference type="PROSITE" id="PS50157">
    <property type="entry name" value="ZINC_FINGER_C2H2_2"/>
    <property type="match status" value="2"/>
</dbReference>
<organism>
    <name type="scientific">Bradysia coprophila</name>
    <name type="common">Dark-winged fungus gnat</name>
    <name type="synonym">Sciara coprophila</name>
    <dbReference type="NCBI Taxonomy" id="38358"/>
    <lineage>
        <taxon>Eukaryota</taxon>
        <taxon>Metazoa</taxon>
        <taxon>Ecdysozoa</taxon>
        <taxon>Arthropoda</taxon>
        <taxon>Hexapoda</taxon>
        <taxon>Insecta</taxon>
        <taxon>Pterygota</taxon>
        <taxon>Neoptera</taxon>
        <taxon>Endopterygota</taxon>
        <taxon>Diptera</taxon>
        <taxon>Nematocera</taxon>
        <taxon>Sciaroidea</taxon>
        <taxon>Sciaridae</taxon>
        <taxon>Bradysia</taxon>
    </lineage>
</organism>
<reference key="1">
    <citation type="journal article" date="1992" name="Proc. Natl. Acad. Sci. U.S.A.">
        <title>Evolutionary conservation pattern of zinc-finger domains of Drosophila segmentation genes.</title>
        <authorList>
            <person name="Sommer R.J."/>
            <person name="Retzlaff M."/>
            <person name="Goerlich K."/>
            <person name="Sander K."/>
            <person name="Tautz D."/>
        </authorList>
    </citation>
    <scope>NUCLEOTIDE SEQUENCE [GENOMIC DNA]</scope>
</reference>
<feature type="chain" id="PRO_0000047047" description="Escargot/snail protein homolog">
    <location>
        <begin position="1" status="less than"/>
        <end position="82" status="greater than"/>
    </location>
</feature>
<feature type="zinc finger region" description="C2H2-type 1" evidence="1">
    <location>
        <begin position="1" status="less than"/>
        <end position="5"/>
    </location>
</feature>
<feature type="zinc finger region" description="C2H2-type 2" evidence="1">
    <location>
        <begin position="18"/>
        <end position="40"/>
    </location>
</feature>
<feature type="zinc finger region" description="C2H2-type 3" evidence="1">
    <location>
        <begin position="44"/>
        <end position="66"/>
    </location>
</feature>
<feature type="zinc finger region" description="C2H2-type 4" evidence="1">
    <location>
        <begin position="72"/>
        <end position="82" status="greater than"/>
    </location>
</feature>
<feature type="non-terminal residue">
    <location>
        <position position="1"/>
    </location>
</feature>
<feature type="non-terminal residue">
    <location>
        <position position="82"/>
    </location>
</feature>
<name>ESCA_BRACO</name>
<proteinExistence type="inferred from homology"/>
<accession>Q01799</accession>
<comment type="subcellular location">
    <subcellularLocation>
        <location evidence="2">Nucleus</location>
    </subcellularLocation>
</comment>
<comment type="similarity">
    <text evidence="2">Belongs to the snail C2H2-type zinc-finger protein family.</text>
</comment>
<keyword id="KW-0238">DNA-binding</keyword>
<keyword id="KW-0479">Metal-binding</keyword>
<keyword id="KW-0539">Nucleus</keyword>
<keyword id="KW-0677">Repeat</keyword>
<keyword id="KW-0862">Zinc</keyword>
<keyword id="KW-0863">Zinc-finger</keyword>
<evidence type="ECO:0000255" key="1">
    <source>
        <dbReference type="PROSITE-ProRule" id="PRU00042"/>
    </source>
</evidence>
<evidence type="ECO:0000305" key="2"/>